<proteinExistence type="inferred from homology"/>
<protein>
    <recommendedName>
        <fullName>Phage shock protein C</fullName>
    </recommendedName>
</protein>
<gene>
    <name type="primary">pspC</name>
    <name type="ordered locus">Z2479</name>
    <name type="ordered locus">ECs1883</name>
</gene>
<dbReference type="EMBL" id="AE005174">
    <property type="protein sequence ID" value="AAG56498.1"/>
    <property type="molecule type" value="Genomic_DNA"/>
</dbReference>
<dbReference type="EMBL" id="BA000007">
    <property type="protein sequence ID" value="BAB35306.1"/>
    <property type="molecule type" value="Genomic_DNA"/>
</dbReference>
<dbReference type="PIR" id="C90864">
    <property type="entry name" value="C90864"/>
</dbReference>
<dbReference type="PIR" id="F85754">
    <property type="entry name" value="F85754"/>
</dbReference>
<dbReference type="RefSeq" id="NP_309910.1">
    <property type="nucleotide sequence ID" value="NC_002695.1"/>
</dbReference>
<dbReference type="RefSeq" id="WP_000907387.1">
    <property type="nucleotide sequence ID" value="NZ_VOAI01000015.1"/>
</dbReference>
<dbReference type="SMR" id="P0AFN4"/>
<dbReference type="STRING" id="155864.Z2479"/>
<dbReference type="GeneID" id="912672"/>
<dbReference type="GeneID" id="93775432"/>
<dbReference type="KEGG" id="ece:Z2479"/>
<dbReference type="KEGG" id="ecs:ECs_1883"/>
<dbReference type="PATRIC" id="fig|386585.9.peg.1987"/>
<dbReference type="eggNOG" id="COG1983">
    <property type="taxonomic scope" value="Bacteria"/>
</dbReference>
<dbReference type="HOGENOM" id="CLU_137949_2_0_6"/>
<dbReference type="OMA" id="MEAYVTS"/>
<dbReference type="Proteomes" id="UP000000558">
    <property type="component" value="Chromosome"/>
</dbReference>
<dbReference type="Proteomes" id="UP000002519">
    <property type="component" value="Chromosome"/>
</dbReference>
<dbReference type="GO" id="GO:0005886">
    <property type="term" value="C:plasma membrane"/>
    <property type="evidence" value="ECO:0007669"/>
    <property type="project" value="UniProtKB-SubCell"/>
</dbReference>
<dbReference type="InterPro" id="IPR014320">
    <property type="entry name" value="Phageshock_PspC"/>
</dbReference>
<dbReference type="InterPro" id="IPR007168">
    <property type="entry name" value="Phageshock_PspC_N"/>
</dbReference>
<dbReference type="InterPro" id="IPR052027">
    <property type="entry name" value="PspC"/>
</dbReference>
<dbReference type="NCBIfam" id="TIGR02978">
    <property type="entry name" value="phageshock_pspC"/>
    <property type="match status" value="1"/>
</dbReference>
<dbReference type="NCBIfam" id="NF007973">
    <property type="entry name" value="PRK10697.1"/>
    <property type="match status" value="1"/>
</dbReference>
<dbReference type="PANTHER" id="PTHR33885">
    <property type="entry name" value="PHAGE SHOCK PROTEIN C"/>
    <property type="match status" value="1"/>
</dbReference>
<dbReference type="PANTHER" id="PTHR33885:SF3">
    <property type="entry name" value="PHAGE SHOCK PROTEIN C"/>
    <property type="match status" value="1"/>
</dbReference>
<dbReference type="Pfam" id="PF04024">
    <property type="entry name" value="PspC"/>
    <property type="match status" value="1"/>
</dbReference>
<organism>
    <name type="scientific">Escherichia coli O157:H7</name>
    <dbReference type="NCBI Taxonomy" id="83334"/>
    <lineage>
        <taxon>Bacteria</taxon>
        <taxon>Pseudomonadati</taxon>
        <taxon>Pseudomonadota</taxon>
        <taxon>Gammaproteobacteria</taxon>
        <taxon>Enterobacterales</taxon>
        <taxon>Enterobacteriaceae</taxon>
        <taxon>Escherichia</taxon>
    </lineage>
</organism>
<comment type="function">
    <text evidence="1">The phage shock protein (psp) operon (pspABCDE) may play a significant role in the competition for survival under nutrient- or energy-limited conditions. PspC is involved in transcription regulation (By similarity).</text>
</comment>
<comment type="subcellular location">
    <subcellularLocation>
        <location evidence="3">Cell inner membrane</location>
        <topology evidence="3">Single-pass membrane protein</topology>
    </subcellularLocation>
</comment>
<comment type="similarity">
    <text evidence="3">Belongs to the phageshock PspC family.</text>
</comment>
<name>PSPC_ECO57</name>
<keyword id="KW-0010">Activator</keyword>
<keyword id="KW-0997">Cell inner membrane</keyword>
<keyword id="KW-1003">Cell membrane</keyword>
<keyword id="KW-0472">Membrane</keyword>
<keyword id="KW-1185">Reference proteome</keyword>
<keyword id="KW-0804">Transcription</keyword>
<keyword id="KW-0805">Transcription regulation</keyword>
<keyword id="KW-0812">Transmembrane</keyword>
<keyword id="KW-1133">Transmembrane helix</keyword>
<reference key="1">
    <citation type="journal article" date="2001" name="Nature">
        <title>Genome sequence of enterohaemorrhagic Escherichia coli O157:H7.</title>
        <authorList>
            <person name="Perna N.T."/>
            <person name="Plunkett G. III"/>
            <person name="Burland V."/>
            <person name="Mau B."/>
            <person name="Glasner J.D."/>
            <person name="Rose D.J."/>
            <person name="Mayhew G.F."/>
            <person name="Evans P.S."/>
            <person name="Gregor J."/>
            <person name="Kirkpatrick H.A."/>
            <person name="Posfai G."/>
            <person name="Hackett J."/>
            <person name="Klink S."/>
            <person name="Boutin A."/>
            <person name="Shao Y."/>
            <person name="Miller L."/>
            <person name="Grotbeck E.J."/>
            <person name="Davis N.W."/>
            <person name="Lim A."/>
            <person name="Dimalanta E.T."/>
            <person name="Potamousis K."/>
            <person name="Apodaca J."/>
            <person name="Anantharaman T.S."/>
            <person name="Lin J."/>
            <person name="Yen G."/>
            <person name="Schwartz D.C."/>
            <person name="Welch R.A."/>
            <person name="Blattner F.R."/>
        </authorList>
    </citation>
    <scope>NUCLEOTIDE SEQUENCE [LARGE SCALE GENOMIC DNA]</scope>
    <source>
        <strain>O157:H7 / EDL933 / ATCC 700927 / EHEC</strain>
    </source>
</reference>
<reference key="2">
    <citation type="journal article" date="2001" name="DNA Res.">
        <title>Complete genome sequence of enterohemorrhagic Escherichia coli O157:H7 and genomic comparison with a laboratory strain K-12.</title>
        <authorList>
            <person name="Hayashi T."/>
            <person name="Makino K."/>
            <person name="Ohnishi M."/>
            <person name="Kurokawa K."/>
            <person name="Ishii K."/>
            <person name="Yokoyama K."/>
            <person name="Han C.-G."/>
            <person name="Ohtsubo E."/>
            <person name="Nakayama K."/>
            <person name="Murata T."/>
            <person name="Tanaka M."/>
            <person name="Tobe T."/>
            <person name="Iida T."/>
            <person name="Takami H."/>
            <person name="Honda T."/>
            <person name="Sasakawa C."/>
            <person name="Ogasawara N."/>
            <person name="Yasunaga T."/>
            <person name="Kuhara S."/>
            <person name="Shiba T."/>
            <person name="Hattori M."/>
            <person name="Shinagawa H."/>
        </authorList>
    </citation>
    <scope>NUCLEOTIDE SEQUENCE [LARGE SCALE GENOMIC DNA]</scope>
    <source>
        <strain>O157:H7 / Sakai / RIMD 0509952 / EHEC</strain>
    </source>
</reference>
<evidence type="ECO:0000250" key="1"/>
<evidence type="ECO:0000255" key="2"/>
<evidence type="ECO:0000305" key="3"/>
<sequence>MAGINLNKKLWRIPQQGMVRGVCAGIANYFDVPVKLVRILVVLSIFFGLALFTLVAYIILSFALDPMPDNMAFGEQLPSSSELLDEVDRELAASETRLREMERYVTSDTFTLRSRFRQL</sequence>
<accession>P0AFN4</accession>
<accession>P23855</accession>
<feature type="chain" id="PRO_0000097076" description="Phage shock protein C">
    <location>
        <begin position="1"/>
        <end position="119"/>
    </location>
</feature>
<feature type="transmembrane region" description="Helical" evidence="2">
    <location>
        <begin position="39"/>
        <end position="59"/>
    </location>
</feature>